<evidence type="ECO:0000250" key="1"/>
<evidence type="ECO:0000250" key="2">
    <source>
        <dbReference type="UniProtKB" id="Q5T9L3"/>
    </source>
</evidence>
<evidence type="ECO:0000250" key="3">
    <source>
        <dbReference type="UniProtKB" id="Q95ST2"/>
    </source>
</evidence>
<evidence type="ECO:0000255" key="4"/>
<evidence type="ECO:0000305" key="5"/>
<evidence type="ECO:0000312" key="6">
    <source>
        <dbReference type="EMBL" id="EDW41065.1"/>
    </source>
</evidence>
<feature type="chain" id="PRO_0000390668" description="Protein wntless" evidence="4">
    <location>
        <begin position="1"/>
        <end position="562"/>
    </location>
</feature>
<feature type="topological domain" description="Cytoplasmic" evidence="2">
    <location>
        <begin position="1"/>
        <end position="13"/>
    </location>
</feature>
<feature type="transmembrane region" description="Helical; Name=1" evidence="4">
    <location>
        <begin position="14"/>
        <end position="34"/>
    </location>
</feature>
<feature type="topological domain" description="Lumenal" evidence="2">
    <location>
        <begin position="35"/>
        <end position="239"/>
    </location>
</feature>
<feature type="transmembrane region" description="Helical; Name=2" evidence="4">
    <location>
        <begin position="240"/>
        <end position="260"/>
    </location>
</feature>
<feature type="topological domain" description="Cytoplasmic" evidence="2">
    <location>
        <begin position="261"/>
        <end position="270"/>
    </location>
</feature>
<feature type="transmembrane region" description="Helical; Name=3" evidence="4">
    <location>
        <begin position="271"/>
        <end position="291"/>
    </location>
</feature>
<feature type="topological domain" description="Lumenal" evidence="2">
    <location>
        <begin position="292"/>
        <end position="311"/>
    </location>
</feature>
<feature type="transmembrane region" description="Helical; Name=4" evidence="4">
    <location>
        <begin position="312"/>
        <end position="332"/>
    </location>
</feature>
<feature type="topological domain" description="Cytoplasmic" evidence="2">
    <location>
        <begin position="333"/>
        <end position="344"/>
    </location>
</feature>
<feature type="transmembrane region" description="Helical; Name=5" evidence="4">
    <location>
        <begin position="345"/>
        <end position="365"/>
    </location>
</feature>
<feature type="topological domain" description="Lumenal" evidence="2">
    <location>
        <begin position="366"/>
        <end position="390"/>
    </location>
</feature>
<feature type="transmembrane region" description="Helical; Name=6" evidence="4">
    <location>
        <begin position="391"/>
        <end position="411"/>
    </location>
</feature>
<feature type="topological domain" description="Cytoplasmic" evidence="2">
    <location>
        <begin position="412"/>
        <end position="441"/>
    </location>
</feature>
<feature type="transmembrane region" description="Helical; Name=7" evidence="4">
    <location>
        <begin position="442"/>
        <end position="462"/>
    </location>
</feature>
<feature type="topological domain" description="Lumenal" evidence="2">
    <location>
        <begin position="463"/>
        <end position="482"/>
    </location>
</feature>
<feature type="transmembrane region" description="Helical; Name=8" evidence="4">
    <location>
        <begin position="483"/>
        <end position="503"/>
    </location>
</feature>
<feature type="topological domain" description="Cytoplasmic" evidence="2">
    <location>
        <begin position="504"/>
        <end position="562"/>
    </location>
</feature>
<feature type="glycosylation site" description="N-linked (GlcNAc...) asparagine" evidence="4">
    <location>
        <position position="58"/>
    </location>
</feature>
<accession>B4HEB1</accession>
<dbReference type="EMBL" id="CH480815">
    <property type="protein sequence ID" value="EDW41065.1"/>
    <property type="status" value="ALT_SEQ"/>
    <property type="molecule type" value="Genomic_DNA"/>
</dbReference>
<dbReference type="SMR" id="B4HEB1"/>
<dbReference type="STRING" id="7238.B4HEB1"/>
<dbReference type="GlyCosmos" id="B4HEB1">
    <property type="glycosylation" value="1 site, No reported glycans"/>
</dbReference>
<dbReference type="EnsemblMetazoa" id="XM_032719822.1">
    <property type="protein sequence ID" value="XP_032575713.1"/>
    <property type="gene ID" value="LOC6605241"/>
</dbReference>
<dbReference type="GeneID" id="6605241"/>
<dbReference type="KEGG" id="dse:6605241"/>
<dbReference type="CTD" id="79971"/>
<dbReference type="OrthoDB" id="9876at7215"/>
<dbReference type="Proteomes" id="UP000001292">
    <property type="component" value="Unassembled WGS sequence"/>
</dbReference>
<dbReference type="GO" id="GO:0042995">
    <property type="term" value="C:cell projection"/>
    <property type="evidence" value="ECO:0007669"/>
    <property type="project" value="UniProtKB-KW"/>
</dbReference>
<dbReference type="GO" id="GO:0005789">
    <property type="term" value="C:endoplasmic reticulum membrane"/>
    <property type="evidence" value="ECO:0000250"/>
    <property type="project" value="UniProtKB"/>
</dbReference>
<dbReference type="GO" id="GO:0010008">
    <property type="term" value="C:endosome membrane"/>
    <property type="evidence" value="ECO:0000250"/>
    <property type="project" value="UniProtKB"/>
</dbReference>
<dbReference type="GO" id="GO:0000139">
    <property type="term" value="C:Golgi membrane"/>
    <property type="evidence" value="ECO:0000250"/>
    <property type="project" value="UniProtKB"/>
</dbReference>
<dbReference type="GO" id="GO:0031594">
    <property type="term" value="C:neuromuscular junction"/>
    <property type="evidence" value="ECO:0000250"/>
    <property type="project" value="UniProtKB"/>
</dbReference>
<dbReference type="GO" id="GO:0005886">
    <property type="term" value="C:plasma membrane"/>
    <property type="evidence" value="ECO:0000250"/>
    <property type="project" value="UniProtKB"/>
</dbReference>
<dbReference type="GO" id="GO:0045211">
    <property type="term" value="C:postsynaptic membrane"/>
    <property type="evidence" value="ECO:0000250"/>
    <property type="project" value="UniProtKB"/>
</dbReference>
<dbReference type="GO" id="GO:0042734">
    <property type="term" value="C:presynaptic membrane"/>
    <property type="evidence" value="ECO:0000250"/>
    <property type="project" value="UniProtKB"/>
</dbReference>
<dbReference type="GO" id="GO:0030672">
    <property type="term" value="C:synaptic vesicle membrane"/>
    <property type="evidence" value="ECO:0000250"/>
    <property type="project" value="UniProtKB"/>
</dbReference>
<dbReference type="GO" id="GO:0017147">
    <property type="term" value="F:Wnt-protein binding"/>
    <property type="evidence" value="ECO:0000250"/>
    <property type="project" value="UniProtKB"/>
</dbReference>
<dbReference type="GO" id="GO:0008587">
    <property type="term" value="P:imaginal disc-derived wing margin morphogenesis"/>
    <property type="evidence" value="ECO:0000250"/>
    <property type="project" value="UniProtKB"/>
</dbReference>
<dbReference type="GO" id="GO:0006886">
    <property type="term" value="P:intracellular protein transport"/>
    <property type="evidence" value="ECO:0007669"/>
    <property type="project" value="TreeGrafter"/>
</dbReference>
<dbReference type="GO" id="GO:0050714">
    <property type="term" value="P:positive regulation of protein secretion"/>
    <property type="evidence" value="ECO:0000250"/>
    <property type="project" value="UniProtKB"/>
</dbReference>
<dbReference type="GO" id="GO:0030177">
    <property type="term" value="P:positive regulation of Wnt signaling pathway"/>
    <property type="evidence" value="ECO:0000250"/>
    <property type="project" value="UniProtKB"/>
</dbReference>
<dbReference type="GO" id="GO:0033157">
    <property type="term" value="P:regulation of intracellular protein transport"/>
    <property type="evidence" value="ECO:0000250"/>
    <property type="project" value="UniProtKB"/>
</dbReference>
<dbReference type="GO" id="GO:0007367">
    <property type="term" value="P:segment polarity determination"/>
    <property type="evidence" value="ECO:0000250"/>
    <property type="project" value="UniProtKB"/>
</dbReference>
<dbReference type="GO" id="GO:0061355">
    <property type="term" value="P:Wnt protein secretion"/>
    <property type="evidence" value="ECO:0007669"/>
    <property type="project" value="TreeGrafter"/>
</dbReference>
<dbReference type="GO" id="GO:0016055">
    <property type="term" value="P:Wnt signaling pathway"/>
    <property type="evidence" value="ECO:0007669"/>
    <property type="project" value="UniProtKB-KW"/>
</dbReference>
<dbReference type="InterPro" id="IPR047843">
    <property type="entry name" value="WLS-like_TM"/>
</dbReference>
<dbReference type="InterPro" id="IPR053936">
    <property type="entry name" value="WLS_GOLD"/>
</dbReference>
<dbReference type="InterPro" id="IPR009551">
    <property type="entry name" value="Wntless"/>
</dbReference>
<dbReference type="PANTHER" id="PTHR13449">
    <property type="entry name" value="INTEGRAL MEMBRANE PROTEIN GPR177"/>
    <property type="match status" value="1"/>
</dbReference>
<dbReference type="PANTHER" id="PTHR13449:SF2">
    <property type="entry name" value="PROTEIN WNTLESS HOMOLOG"/>
    <property type="match status" value="1"/>
</dbReference>
<dbReference type="Pfam" id="PF06664">
    <property type="entry name" value="WLS-like_TM"/>
    <property type="match status" value="1"/>
</dbReference>
<dbReference type="Pfam" id="PF21883">
    <property type="entry name" value="WLS_GOLD"/>
    <property type="match status" value="1"/>
</dbReference>
<name>WLS_DROSE</name>
<gene>
    <name evidence="3" type="primary">wls</name>
    <name type="ORF">GM24767</name>
</gene>
<sequence length="562" mass="64027">MSGTILENLSGRKLSILVATLLLCQVLCFLLGGLYAPLPAGHVTVLGSLCREDHARQNDTGFLLYSRGAGACIPVTREEVEQDSTKMANELVHVFQMPLPRDLRDLDYSRWQQNLIGVLQVEFGYDSSSELREPPRELQLTIDMRLAYRNKGDPDNGWKLYAHGVEHRYLDCVTSHVGPTETLYSCDMIPLFELGALHHSFYLLNLRFPLDTPSQMNLQFGHMHDLTLTAIHQNGGFTQIWLLLKTMLFPFVVGIMIWFWRRVHLLQRSPALLEYMLIYLGAALTFLNLPLEYLSLVYEMPYMLLLSDIRQGIFYAMLLTFWLVFAGEHMLIQDAPNKSTIRSRYWKHLSAVVVGCISLFVFDICERGVQLRNPFYSIWTTPLGAKVAMTFIVLAGVSAAIYFLFLCYMIWKVFRNIGDKRTSLPSMSQARRLHYEGLIYRFKFLMLATLVCAALTVAGFIMGQMAEGQWDWNDNVAIQPTSAFLTGVYGMWNIYIFALLILYAPSHKQWPAMHHSDETTQSNENIVASAASEEIEFSHLPSDSNPSEISSLTSFTRKVAFD</sequence>
<proteinExistence type="inferred from homology"/>
<organism>
    <name type="scientific">Drosophila sechellia</name>
    <name type="common">Fruit fly</name>
    <dbReference type="NCBI Taxonomy" id="7238"/>
    <lineage>
        <taxon>Eukaryota</taxon>
        <taxon>Metazoa</taxon>
        <taxon>Ecdysozoa</taxon>
        <taxon>Arthropoda</taxon>
        <taxon>Hexapoda</taxon>
        <taxon>Insecta</taxon>
        <taxon>Pterygota</taxon>
        <taxon>Neoptera</taxon>
        <taxon>Endopterygota</taxon>
        <taxon>Diptera</taxon>
        <taxon>Brachycera</taxon>
        <taxon>Muscomorpha</taxon>
        <taxon>Ephydroidea</taxon>
        <taxon>Drosophilidae</taxon>
        <taxon>Drosophila</taxon>
        <taxon>Sophophora</taxon>
    </lineage>
</organism>
<keyword id="KW-1003">Cell membrane</keyword>
<keyword id="KW-0966">Cell projection</keyword>
<keyword id="KW-0217">Developmental protein</keyword>
<keyword id="KW-0256">Endoplasmic reticulum</keyword>
<keyword id="KW-0967">Endosome</keyword>
<keyword id="KW-0325">Glycoprotein</keyword>
<keyword id="KW-0333">Golgi apparatus</keyword>
<keyword id="KW-0472">Membrane</keyword>
<keyword id="KW-0628">Postsynaptic cell membrane</keyword>
<keyword id="KW-1185">Reference proteome</keyword>
<keyword id="KW-0709">Segmentation polarity protein</keyword>
<keyword id="KW-0770">Synapse</keyword>
<keyword id="KW-0812">Transmembrane</keyword>
<keyword id="KW-1133">Transmembrane helix</keyword>
<keyword id="KW-0879">Wnt signaling pathway</keyword>
<reference evidence="6" key="1">
    <citation type="journal article" date="2007" name="Nature">
        <title>Evolution of genes and genomes on the Drosophila phylogeny.</title>
        <authorList>
            <consortium name="Drosophila 12 genomes consortium"/>
        </authorList>
    </citation>
    <scope>NUCLEOTIDE SEQUENCE [LARGE SCALE GENOMIC DNA]</scope>
    <source>
        <strain evidence="6">Rob3c / Tucson 14021-0248.25</strain>
    </source>
</reference>
<protein>
    <recommendedName>
        <fullName evidence="3">Protein wntless</fullName>
    </recommendedName>
</protein>
<comment type="function">
    <text evidence="1">A segment polarity gene required for wingless (wg)-dependent patterning processes, acting in both wg-sending cells and wg-target cells. In non-neuronal cells wls directs wg secretion. The wls traffic loop encompasses the Golgi, the cell surface, an endocytic compartment and a retrograde route leading back to the Golgi, and involves clathrin-mediated endocytosis and the retromer complex (a conserved protein complex consisting of Vps35 and Vps26). In neuronal cells (the larval motorneuron NMJ), the wg signal moves across the synapse via the release of wls-containing exosome-like vesicles. Postsynaptic wls is required for the trafficking of fz2 through the fz2-interacting protein Grip (By similarity).</text>
</comment>
<comment type="subunit">
    <text evidence="1">Interacts with wg; in the Golgi. Interacts with Vps35, a component of the retromer complex; wls stability is regulated by Vps35 (By similarity).</text>
</comment>
<comment type="subcellular location">
    <subcellularLocation>
        <location evidence="3">Presynaptic cell membrane</location>
        <topology evidence="3">Multi-pass membrane protein</topology>
    </subcellularLocation>
    <subcellularLocation>
        <location evidence="3">Postsynaptic cell membrane</location>
        <topology evidence="3">Multi-pass membrane protein</topology>
    </subcellularLocation>
    <subcellularLocation>
        <location evidence="3">Cell membrane</location>
        <topology evidence="3">Multi-pass membrane protein</topology>
    </subcellularLocation>
    <subcellularLocation>
        <location evidence="3">Endoplasmic reticulum membrane</location>
        <topology evidence="3">Multi-pass membrane protein</topology>
    </subcellularLocation>
    <subcellularLocation>
        <location evidence="3">Endosome membrane</location>
        <topology evidence="3">Multi-pass membrane protein</topology>
    </subcellularLocation>
    <subcellularLocation>
        <location evidence="3">Golgi apparatus membrane</location>
        <topology evidence="3">Multi-pass membrane protein</topology>
    </subcellularLocation>
    <text evidence="1">In non-neuronal cells, wls binds to wg in the Golgi and accompanies it to the plasma membrane where the two proteins dissociate. Wg is secreted and wls is then internalized and returns to the Golgi apparatus in a retromer-dependent manner. Wls and wg colocalize in the Golgi apparatus in wg-producing cells, and reduced expression is seen in non-producing cells. Endoplasmic reticulum expression is unchanged in wg-producing versus non-producing cells. In neuronal cells, wls is localized both pre- and postsynaptically and is transferred trans-synaptically from the pre- to the postsynaptic compartment (By similarity).</text>
</comment>
<comment type="similarity">
    <text evidence="4">Belongs to the wntless family.</text>
</comment>
<comment type="sequence caution" evidence="5">
    <conflict type="erroneous gene model prediction">
        <sequence resource="EMBL-CDS" id="EDW41065"/>
    </conflict>
</comment>